<proteinExistence type="inferred from homology"/>
<accession>Q65SD6</accession>
<gene>
    <name evidence="1" type="primary">miaA</name>
    <name type="ordered locus">MS1517</name>
</gene>
<keyword id="KW-0067">ATP-binding</keyword>
<keyword id="KW-0460">Magnesium</keyword>
<keyword id="KW-0547">Nucleotide-binding</keyword>
<keyword id="KW-0808">Transferase</keyword>
<keyword id="KW-0819">tRNA processing</keyword>
<comment type="function">
    <text evidence="1">Catalyzes the transfer of a dimethylallyl group onto the adenine at position 37 in tRNAs that read codons beginning with uridine, leading to the formation of N6-(dimethylallyl)adenosine (i(6)A).</text>
</comment>
<comment type="catalytic activity">
    <reaction evidence="1">
        <text>adenosine(37) in tRNA + dimethylallyl diphosphate = N(6)-dimethylallyladenosine(37) in tRNA + diphosphate</text>
        <dbReference type="Rhea" id="RHEA:26482"/>
        <dbReference type="Rhea" id="RHEA-COMP:10162"/>
        <dbReference type="Rhea" id="RHEA-COMP:10375"/>
        <dbReference type="ChEBI" id="CHEBI:33019"/>
        <dbReference type="ChEBI" id="CHEBI:57623"/>
        <dbReference type="ChEBI" id="CHEBI:74411"/>
        <dbReference type="ChEBI" id="CHEBI:74415"/>
        <dbReference type="EC" id="2.5.1.75"/>
    </reaction>
</comment>
<comment type="cofactor">
    <cofactor evidence="1">
        <name>Mg(2+)</name>
        <dbReference type="ChEBI" id="CHEBI:18420"/>
    </cofactor>
</comment>
<comment type="subunit">
    <text evidence="1">Monomer.</text>
</comment>
<comment type="similarity">
    <text evidence="1">Belongs to the IPP transferase family.</text>
</comment>
<organism>
    <name type="scientific">Mannheimia succiniciproducens (strain KCTC 0769BP / MBEL55E)</name>
    <dbReference type="NCBI Taxonomy" id="221988"/>
    <lineage>
        <taxon>Bacteria</taxon>
        <taxon>Pseudomonadati</taxon>
        <taxon>Pseudomonadota</taxon>
        <taxon>Gammaproteobacteria</taxon>
        <taxon>Pasteurellales</taxon>
        <taxon>Pasteurellaceae</taxon>
        <taxon>Basfia</taxon>
    </lineage>
</organism>
<name>MIAA_MANSM</name>
<protein>
    <recommendedName>
        <fullName evidence="1">tRNA dimethylallyltransferase</fullName>
        <ecNumber evidence="1">2.5.1.75</ecNumber>
    </recommendedName>
    <alternativeName>
        <fullName evidence="1">Dimethylallyl diphosphate:tRNA dimethylallyltransferase</fullName>
        <shortName evidence="1">DMAPP:tRNA dimethylallyltransferase</shortName>
        <shortName evidence="1">DMATase</shortName>
    </alternativeName>
    <alternativeName>
        <fullName evidence="1">Isopentenyl-diphosphate:tRNA isopentenyltransferase</fullName>
        <shortName evidence="1">IPP transferase</shortName>
        <shortName evidence="1">IPPT</shortName>
        <shortName evidence="1">IPTase</shortName>
    </alternativeName>
</protein>
<evidence type="ECO:0000255" key="1">
    <source>
        <dbReference type="HAMAP-Rule" id="MF_00185"/>
    </source>
</evidence>
<feature type="chain" id="PRO_0000163937" description="tRNA dimethylallyltransferase">
    <location>
        <begin position="1"/>
        <end position="314"/>
    </location>
</feature>
<feature type="region of interest" description="Interaction with substrate tRNA" evidence="1">
    <location>
        <begin position="37"/>
        <end position="40"/>
    </location>
</feature>
<feature type="region of interest" description="Interaction with substrate tRNA" evidence="1">
    <location>
        <begin position="161"/>
        <end position="165"/>
    </location>
</feature>
<feature type="region of interest" description="Interaction with substrate tRNA" evidence="1">
    <location>
        <begin position="242"/>
        <end position="247"/>
    </location>
</feature>
<feature type="region of interest" description="Interaction with substrate tRNA" evidence="1">
    <location>
        <begin position="275"/>
        <end position="282"/>
    </location>
</feature>
<feature type="binding site" evidence="1">
    <location>
        <begin position="12"/>
        <end position="19"/>
    </location>
    <ligand>
        <name>ATP</name>
        <dbReference type="ChEBI" id="CHEBI:30616"/>
    </ligand>
</feature>
<feature type="binding site" evidence="1">
    <location>
        <begin position="14"/>
        <end position="19"/>
    </location>
    <ligand>
        <name>substrate</name>
    </ligand>
</feature>
<feature type="site" description="Interaction with substrate tRNA" evidence="1">
    <location>
        <position position="103"/>
    </location>
</feature>
<feature type="site" description="Interaction with substrate tRNA" evidence="1">
    <location>
        <position position="125"/>
    </location>
</feature>
<dbReference type="EC" id="2.5.1.75" evidence="1"/>
<dbReference type="EMBL" id="AE016827">
    <property type="protein sequence ID" value="AAU38124.1"/>
    <property type="molecule type" value="Genomic_DNA"/>
</dbReference>
<dbReference type="RefSeq" id="WP_011200690.1">
    <property type="nucleotide sequence ID" value="NC_006300.1"/>
</dbReference>
<dbReference type="SMR" id="Q65SD6"/>
<dbReference type="STRING" id="221988.MS1517"/>
<dbReference type="KEGG" id="msu:MS1517"/>
<dbReference type="eggNOG" id="COG0324">
    <property type="taxonomic scope" value="Bacteria"/>
</dbReference>
<dbReference type="HOGENOM" id="CLU_032616_0_0_6"/>
<dbReference type="OrthoDB" id="9776390at2"/>
<dbReference type="Proteomes" id="UP000000607">
    <property type="component" value="Chromosome"/>
</dbReference>
<dbReference type="GO" id="GO:0005524">
    <property type="term" value="F:ATP binding"/>
    <property type="evidence" value="ECO:0007669"/>
    <property type="project" value="UniProtKB-UniRule"/>
</dbReference>
<dbReference type="GO" id="GO:0052381">
    <property type="term" value="F:tRNA dimethylallyltransferase activity"/>
    <property type="evidence" value="ECO:0007669"/>
    <property type="project" value="UniProtKB-UniRule"/>
</dbReference>
<dbReference type="GO" id="GO:0006400">
    <property type="term" value="P:tRNA modification"/>
    <property type="evidence" value="ECO:0007669"/>
    <property type="project" value="TreeGrafter"/>
</dbReference>
<dbReference type="FunFam" id="1.10.20.140:FF:000001">
    <property type="entry name" value="tRNA dimethylallyltransferase"/>
    <property type="match status" value="1"/>
</dbReference>
<dbReference type="Gene3D" id="1.10.20.140">
    <property type="match status" value="1"/>
</dbReference>
<dbReference type="Gene3D" id="3.40.50.300">
    <property type="entry name" value="P-loop containing nucleotide triphosphate hydrolases"/>
    <property type="match status" value="1"/>
</dbReference>
<dbReference type="HAMAP" id="MF_00185">
    <property type="entry name" value="IPP_trans"/>
    <property type="match status" value="1"/>
</dbReference>
<dbReference type="InterPro" id="IPR039657">
    <property type="entry name" value="Dimethylallyltransferase"/>
</dbReference>
<dbReference type="InterPro" id="IPR018022">
    <property type="entry name" value="IPT"/>
</dbReference>
<dbReference type="InterPro" id="IPR027417">
    <property type="entry name" value="P-loop_NTPase"/>
</dbReference>
<dbReference type="NCBIfam" id="TIGR00174">
    <property type="entry name" value="miaA"/>
    <property type="match status" value="1"/>
</dbReference>
<dbReference type="PANTHER" id="PTHR11088">
    <property type="entry name" value="TRNA DIMETHYLALLYLTRANSFERASE"/>
    <property type="match status" value="1"/>
</dbReference>
<dbReference type="PANTHER" id="PTHR11088:SF60">
    <property type="entry name" value="TRNA DIMETHYLALLYLTRANSFERASE"/>
    <property type="match status" value="1"/>
</dbReference>
<dbReference type="Pfam" id="PF01715">
    <property type="entry name" value="IPPT"/>
    <property type="match status" value="1"/>
</dbReference>
<dbReference type="SUPFAM" id="SSF52540">
    <property type="entry name" value="P-loop containing nucleoside triphosphate hydrolases"/>
    <property type="match status" value="1"/>
</dbReference>
<reference key="1">
    <citation type="journal article" date="2004" name="Nat. Biotechnol.">
        <title>The genome sequence of the capnophilic rumen bacterium Mannheimia succiniciproducens.</title>
        <authorList>
            <person name="Hong S.H."/>
            <person name="Kim J.S."/>
            <person name="Lee S.Y."/>
            <person name="In Y.H."/>
            <person name="Choi S.S."/>
            <person name="Rih J.-K."/>
            <person name="Kim C.H."/>
            <person name="Jeong H."/>
            <person name="Hur C.G."/>
            <person name="Kim J.J."/>
        </authorList>
    </citation>
    <scope>NUCLEOTIDE SEQUENCE [LARGE SCALE GENOMIC DNA]</scope>
    <source>
        <strain>KCTC 0769BP / MBEL55E</strain>
    </source>
</reference>
<sequence length="314" mass="35945">MNQKPTAIFLMGPTASGKTDLAIQLRQELPVEVISVDSALIYKGMDIGTAKPSKEELALAPHRLIDIIDPAESYSAANFRSDALREMADITEQGRIPLLVGGTMLYYKALLEGLSPLPQADEKVRSKIEEKAQKFGWATLHKELSLIDPVSAARINPNDSQRINRALEVFYISGKSMTELTEQKGEQLPYHILQFAIAPEDRAILHRRIEMRFHKMIESGFKQEVERLYHRGDLHIDLPSIRCVGYRQMWEHLRGDYDLDEAVFRGICATRQLAKRQITWLRGWKYPIQWLDSLKNSENKEIIKRAFDLTMQNG</sequence>